<sequence length="171" mass="19369">MSVLQVVLYPDDRLTKVCEPVTQVDDELNQFIDDMFDTMYQEGGIGLAASQVGVLKRVITIDIEGDKTNQVVLINPEILESCGETGIEEGCLSIPGYRALVPRKEKITVKALNRQGEEVIYHADDLFAICIQHEIDHLNGIVFVDHISNLKRQRIKDKMQKLKKQLYRSKA</sequence>
<gene>
    <name evidence="1" type="primary">def</name>
    <name type="ordered locus">HD_1889</name>
</gene>
<dbReference type="EC" id="3.5.1.88" evidence="1"/>
<dbReference type="EMBL" id="AE017143">
    <property type="protein sequence ID" value="AAP96618.1"/>
    <property type="molecule type" value="Genomic_DNA"/>
</dbReference>
<dbReference type="RefSeq" id="WP_010945646.1">
    <property type="nucleotide sequence ID" value="NC_002940.2"/>
</dbReference>
<dbReference type="SMR" id="Q7VKK9"/>
<dbReference type="STRING" id="233412.HD_1889"/>
<dbReference type="KEGG" id="hdu:HD_1889"/>
<dbReference type="eggNOG" id="COG0242">
    <property type="taxonomic scope" value="Bacteria"/>
</dbReference>
<dbReference type="HOGENOM" id="CLU_061901_2_1_6"/>
<dbReference type="OrthoDB" id="9804313at2"/>
<dbReference type="Proteomes" id="UP000001022">
    <property type="component" value="Chromosome"/>
</dbReference>
<dbReference type="GO" id="GO:0046872">
    <property type="term" value="F:metal ion binding"/>
    <property type="evidence" value="ECO:0007669"/>
    <property type="project" value="UniProtKB-KW"/>
</dbReference>
<dbReference type="GO" id="GO:0042586">
    <property type="term" value="F:peptide deformylase activity"/>
    <property type="evidence" value="ECO:0007669"/>
    <property type="project" value="UniProtKB-UniRule"/>
</dbReference>
<dbReference type="GO" id="GO:0043686">
    <property type="term" value="P:co-translational protein modification"/>
    <property type="evidence" value="ECO:0007669"/>
    <property type="project" value="TreeGrafter"/>
</dbReference>
<dbReference type="GO" id="GO:0006412">
    <property type="term" value="P:translation"/>
    <property type="evidence" value="ECO:0007669"/>
    <property type="project" value="UniProtKB-UniRule"/>
</dbReference>
<dbReference type="CDD" id="cd00487">
    <property type="entry name" value="Pep_deformylase"/>
    <property type="match status" value="1"/>
</dbReference>
<dbReference type="FunFam" id="3.90.45.10:FF:000001">
    <property type="entry name" value="Peptide deformylase"/>
    <property type="match status" value="1"/>
</dbReference>
<dbReference type="Gene3D" id="3.90.45.10">
    <property type="entry name" value="Peptide deformylase"/>
    <property type="match status" value="1"/>
</dbReference>
<dbReference type="HAMAP" id="MF_00163">
    <property type="entry name" value="Pep_deformylase"/>
    <property type="match status" value="1"/>
</dbReference>
<dbReference type="InterPro" id="IPR023635">
    <property type="entry name" value="Peptide_deformylase"/>
</dbReference>
<dbReference type="InterPro" id="IPR036821">
    <property type="entry name" value="Peptide_deformylase_sf"/>
</dbReference>
<dbReference type="NCBIfam" id="TIGR00079">
    <property type="entry name" value="pept_deformyl"/>
    <property type="match status" value="1"/>
</dbReference>
<dbReference type="NCBIfam" id="NF001159">
    <property type="entry name" value="PRK00150.1-3"/>
    <property type="match status" value="1"/>
</dbReference>
<dbReference type="PANTHER" id="PTHR10458">
    <property type="entry name" value="PEPTIDE DEFORMYLASE"/>
    <property type="match status" value="1"/>
</dbReference>
<dbReference type="PANTHER" id="PTHR10458:SF21">
    <property type="entry name" value="PEPTIDE DEFORMYLASE"/>
    <property type="match status" value="1"/>
</dbReference>
<dbReference type="Pfam" id="PF01327">
    <property type="entry name" value="Pep_deformylase"/>
    <property type="match status" value="1"/>
</dbReference>
<dbReference type="PIRSF" id="PIRSF004749">
    <property type="entry name" value="Pep_def"/>
    <property type="match status" value="1"/>
</dbReference>
<dbReference type="PRINTS" id="PR01576">
    <property type="entry name" value="PDEFORMYLASE"/>
</dbReference>
<dbReference type="SUPFAM" id="SSF56420">
    <property type="entry name" value="Peptide deformylase"/>
    <property type="match status" value="1"/>
</dbReference>
<name>DEF_HAEDU</name>
<protein>
    <recommendedName>
        <fullName evidence="1">Peptide deformylase</fullName>
        <shortName evidence="1">PDF</shortName>
        <ecNumber evidence="1">3.5.1.88</ecNumber>
    </recommendedName>
    <alternativeName>
        <fullName evidence="1">Polypeptide deformylase</fullName>
    </alternativeName>
</protein>
<proteinExistence type="inferred from homology"/>
<organism>
    <name type="scientific">Haemophilus ducreyi (strain 35000HP / ATCC 700724)</name>
    <dbReference type="NCBI Taxonomy" id="233412"/>
    <lineage>
        <taxon>Bacteria</taxon>
        <taxon>Pseudomonadati</taxon>
        <taxon>Pseudomonadota</taxon>
        <taxon>Gammaproteobacteria</taxon>
        <taxon>Pasteurellales</taxon>
        <taxon>Pasteurellaceae</taxon>
        <taxon>Haemophilus</taxon>
    </lineage>
</organism>
<feature type="chain" id="PRO_0000082787" description="Peptide deformylase">
    <location>
        <begin position="1"/>
        <end position="171"/>
    </location>
</feature>
<feature type="active site" evidence="1">
    <location>
        <position position="134"/>
    </location>
</feature>
<feature type="binding site" evidence="1">
    <location>
        <position position="91"/>
    </location>
    <ligand>
        <name>Fe cation</name>
        <dbReference type="ChEBI" id="CHEBI:24875"/>
    </ligand>
</feature>
<feature type="binding site" evidence="1">
    <location>
        <position position="133"/>
    </location>
    <ligand>
        <name>Fe cation</name>
        <dbReference type="ChEBI" id="CHEBI:24875"/>
    </ligand>
</feature>
<feature type="binding site" evidence="1">
    <location>
        <position position="137"/>
    </location>
    <ligand>
        <name>Fe cation</name>
        <dbReference type="ChEBI" id="CHEBI:24875"/>
    </ligand>
</feature>
<accession>Q7VKK9</accession>
<reference key="1">
    <citation type="submission" date="2003-06" db="EMBL/GenBank/DDBJ databases">
        <title>The complete genome sequence of Haemophilus ducreyi.</title>
        <authorList>
            <person name="Munson R.S. Jr."/>
            <person name="Ray W.C."/>
            <person name="Mahairas G."/>
            <person name="Sabo P."/>
            <person name="Mungur R."/>
            <person name="Johnson L."/>
            <person name="Nguyen D."/>
            <person name="Wang J."/>
            <person name="Forst C."/>
            <person name="Hood L."/>
        </authorList>
    </citation>
    <scope>NUCLEOTIDE SEQUENCE [LARGE SCALE GENOMIC DNA]</scope>
    <source>
        <strain>35000HP / ATCC 700724</strain>
    </source>
</reference>
<comment type="function">
    <text evidence="1">Removes the formyl group from the N-terminal Met of newly synthesized proteins. Requires at least a dipeptide for an efficient rate of reaction. N-terminal L-methionine is a prerequisite for activity but the enzyme has broad specificity at other positions.</text>
</comment>
<comment type="catalytic activity">
    <reaction evidence="1">
        <text>N-terminal N-formyl-L-methionyl-[peptide] + H2O = N-terminal L-methionyl-[peptide] + formate</text>
        <dbReference type="Rhea" id="RHEA:24420"/>
        <dbReference type="Rhea" id="RHEA-COMP:10639"/>
        <dbReference type="Rhea" id="RHEA-COMP:10640"/>
        <dbReference type="ChEBI" id="CHEBI:15377"/>
        <dbReference type="ChEBI" id="CHEBI:15740"/>
        <dbReference type="ChEBI" id="CHEBI:49298"/>
        <dbReference type="ChEBI" id="CHEBI:64731"/>
        <dbReference type="EC" id="3.5.1.88"/>
    </reaction>
</comment>
<comment type="cofactor">
    <cofactor evidence="1">
        <name>Fe(2+)</name>
        <dbReference type="ChEBI" id="CHEBI:29033"/>
    </cofactor>
    <text evidence="1">Binds 1 Fe(2+) ion.</text>
</comment>
<comment type="similarity">
    <text evidence="1">Belongs to the polypeptide deformylase family.</text>
</comment>
<keyword id="KW-0378">Hydrolase</keyword>
<keyword id="KW-0408">Iron</keyword>
<keyword id="KW-0479">Metal-binding</keyword>
<keyword id="KW-0648">Protein biosynthesis</keyword>
<keyword id="KW-1185">Reference proteome</keyword>
<evidence type="ECO:0000255" key="1">
    <source>
        <dbReference type="HAMAP-Rule" id="MF_00163"/>
    </source>
</evidence>